<feature type="chain" id="PRO_1000023636" description="Elongation factor P--(R)-beta-lysine ligase">
    <location>
        <begin position="1"/>
        <end position="325"/>
    </location>
</feature>
<feature type="binding site" evidence="1">
    <location>
        <begin position="76"/>
        <end position="78"/>
    </location>
    <ligand>
        <name>substrate</name>
    </ligand>
</feature>
<feature type="binding site" evidence="1">
    <location>
        <begin position="100"/>
        <end position="102"/>
    </location>
    <ligand>
        <name>ATP</name>
        <dbReference type="ChEBI" id="CHEBI:30616"/>
    </ligand>
</feature>
<feature type="binding site" evidence="1">
    <location>
        <position position="109"/>
    </location>
    <ligand>
        <name>ATP</name>
        <dbReference type="ChEBI" id="CHEBI:30616"/>
    </ligand>
</feature>
<feature type="binding site" evidence="1">
    <location>
        <position position="118"/>
    </location>
    <ligand>
        <name>substrate</name>
    </ligand>
</feature>
<feature type="binding site" evidence="1">
    <location>
        <begin position="244"/>
        <end position="245"/>
    </location>
    <ligand>
        <name>ATP</name>
        <dbReference type="ChEBI" id="CHEBI:30616"/>
    </ligand>
</feature>
<feature type="binding site" evidence="1">
    <location>
        <position position="251"/>
    </location>
    <ligand>
        <name>substrate</name>
    </ligand>
</feature>
<feature type="binding site" evidence="1">
    <location>
        <position position="300"/>
    </location>
    <ligand>
        <name>ATP</name>
        <dbReference type="ChEBI" id="CHEBI:30616"/>
    </ligand>
</feature>
<dbReference type="EC" id="6.3.2.-" evidence="1"/>
<dbReference type="EMBL" id="CP000305">
    <property type="protein sequence ID" value="ABG19636.1"/>
    <property type="molecule type" value="Genomic_DNA"/>
</dbReference>
<dbReference type="EMBL" id="ACNQ01000017">
    <property type="protein sequence ID" value="EEO75823.1"/>
    <property type="molecule type" value="Genomic_DNA"/>
</dbReference>
<dbReference type="RefSeq" id="WP_002209139.1">
    <property type="nucleotide sequence ID" value="NZ_ACNQ01000017.1"/>
</dbReference>
<dbReference type="SMR" id="Q1CEE4"/>
<dbReference type="GeneID" id="57974246"/>
<dbReference type="KEGG" id="ypn:YPN_3309"/>
<dbReference type="HOGENOM" id="CLU_008255_1_1_6"/>
<dbReference type="Proteomes" id="UP000008936">
    <property type="component" value="Chromosome"/>
</dbReference>
<dbReference type="GO" id="GO:0005829">
    <property type="term" value="C:cytosol"/>
    <property type="evidence" value="ECO:0007669"/>
    <property type="project" value="TreeGrafter"/>
</dbReference>
<dbReference type="GO" id="GO:0016880">
    <property type="term" value="F:acid-ammonia (or amide) ligase activity"/>
    <property type="evidence" value="ECO:0007669"/>
    <property type="project" value="UniProtKB-UniRule"/>
</dbReference>
<dbReference type="GO" id="GO:0005524">
    <property type="term" value="F:ATP binding"/>
    <property type="evidence" value="ECO:0007669"/>
    <property type="project" value="UniProtKB-UniRule"/>
</dbReference>
<dbReference type="GO" id="GO:0004824">
    <property type="term" value="F:lysine-tRNA ligase activity"/>
    <property type="evidence" value="ECO:0007669"/>
    <property type="project" value="InterPro"/>
</dbReference>
<dbReference type="GO" id="GO:0000049">
    <property type="term" value="F:tRNA binding"/>
    <property type="evidence" value="ECO:0007669"/>
    <property type="project" value="TreeGrafter"/>
</dbReference>
<dbReference type="GO" id="GO:0006430">
    <property type="term" value="P:lysyl-tRNA aminoacylation"/>
    <property type="evidence" value="ECO:0007669"/>
    <property type="project" value="InterPro"/>
</dbReference>
<dbReference type="FunFam" id="3.30.930.10:FF:000017">
    <property type="entry name" value="Elongation factor P--(R)-beta-lysine ligase"/>
    <property type="match status" value="1"/>
</dbReference>
<dbReference type="Gene3D" id="3.30.930.10">
    <property type="entry name" value="Bira Bifunctional Protein, Domain 2"/>
    <property type="match status" value="1"/>
</dbReference>
<dbReference type="HAMAP" id="MF_00174">
    <property type="entry name" value="EF_P_modif_A"/>
    <property type="match status" value="1"/>
</dbReference>
<dbReference type="InterPro" id="IPR004364">
    <property type="entry name" value="Aa-tRNA-synt_II"/>
</dbReference>
<dbReference type="InterPro" id="IPR006195">
    <property type="entry name" value="aa-tRNA-synth_II"/>
</dbReference>
<dbReference type="InterPro" id="IPR045864">
    <property type="entry name" value="aa-tRNA-synth_II/BPL/LPL"/>
</dbReference>
<dbReference type="InterPro" id="IPR004525">
    <property type="entry name" value="EpmA"/>
</dbReference>
<dbReference type="InterPro" id="IPR018149">
    <property type="entry name" value="Lys-tRNA-synth_II_C"/>
</dbReference>
<dbReference type="NCBIfam" id="TIGR00462">
    <property type="entry name" value="genX"/>
    <property type="match status" value="1"/>
</dbReference>
<dbReference type="NCBIfam" id="NF006828">
    <property type="entry name" value="PRK09350.1"/>
    <property type="match status" value="1"/>
</dbReference>
<dbReference type="PANTHER" id="PTHR42918:SF6">
    <property type="entry name" value="ELONGATION FACTOR P--(R)-BETA-LYSINE LIGASE"/>
    <property type="match status" value="1"/>
</dbReference>
<dbReference type="PANTHER" id="PTHR42918">
    <property type="entry name" value="LYSYL-TRNA SYNTHETASE"/>
    <property type="match status" value="1"/>
</dbReference>
<dbReference type="Pfam" id="PF00152">
    <property type="entry name" value="tRNA-synt_2"/>
    <property type="match status" value="1"/>
</dbReference>
<dbReference type="PRINTS" id="PR00982">
    <property type="entry name" value="TRNASYNTHLYS"/>
</dbReference>
<dbReference type="SUPFAM" id="SSF55681">
    <property type="entry name" value="Class II aaRS and biotin synthetases"/>
    <property type="match status" value="1"/>
</dbReference>
<dbReference type="PROSITE" id="PS50862">
    <property type="entry name" value="AA_TRNA_LIGASE_II"/>
    <property type="match status" value="1"/>
</dbReference>
<sequence>MSDTASWQPSAPIANLLKRAAIMAEIRRFFADRGVLEVETPTMSQATVTDIHLVPFETRFVGPGAADGLTLYMMTSPEYHMKRLLAAGSGPIYQLGRSFRNEEAGRYHNPEFTMLEWYRPHYDMYRLMNEVDDLLQQILDCNSAETLSYQQAFLRHLNIDPLSAEKAQLREVAAKLDLSNIADTEEDRDTLLQLLFTVGVEPYIGRDKPAFIYHFPASQASLAEISTEDHRVAERFEVYFKGIELANGFRELTDGDEQLQRFEQDNRNRAKRGLPQNPIDMNLIAALKQGLPDCSGVALGVDRLVMLALNAERLSDVIAFPVNIA</sequence>
<accession>Q1CEE4</accession>
<accession>C4GY23</accession>
<protein>
    <recommendedName>
        <fullName evidence="1">Elongation factor P--(R)-beta-lysine ligase</fullName>
        <shortName evidence="1">EF-P--(R)-beta-lysine ligase</shortName>
        <ecNumber evidence="1">6.3.2.-</ecNumber>
    </recommendedName>
    <alternativeName>
        <fullName evidence="1">EF-P post-translational modification enzyme A</fullName>
    </alternativeName>
    <alternativeName>
        <fullName evidence="1">EF-P-lysine lysyltransferase</fullName>
    </alternativeName>
</protein>
<reference key="1">
    <citation type="journal article" date="2006" name="J. Bacteriol.">
        <title>Complete genome sequence of Yersinia pestis strains Antiqua and Nepal516: evidence of gene reduction in an emerging pathogen.</title>
        <authorList>
            <person name="Chain P.S.G."/>
            <person name="Hu P."/>
            <person name="Malfatti S.A."/>
            <person name="Radnedge L."/>
            <person name="Larimer F."/>
            <person name="Vergez L.M."/>
            <person name="Worsham P."/>
            <person name="Chu M.C."/>
            <person name="Andersen G.L."/>
        </authorList>
    </citation>
    <scope>NUCLEOTIDE SEQUENCE [LARGE SCALE GENOMIC DNA]</scope>
    <source>
        <strain>Nepal516</strain>
    </source>
</reference>
<reference key="2">
    <citation type="submission" date="2009-04" db="EMBL/GenBank/DDBJ databases">
        <title>Yersinia pestis Nepal516A whole genome shotgun sequencing project.</title>
        <authorList>
            <person name="Plunkett G. III"/>
            <person name="Anderson B.D."/>
            <person name="Baumler D.J."/>
            <person name="Burland V."/>
            <person name="Cabot E.L."/>
            <person name="Glasner J.D."/>
            <person name="Mau B."/>
            <person name="Neeno-Eckwall E."/>
            <person name="Perna N.T."/>
            <person name="Munk A.C."/>
            <person name="Tapia R."/>
            <person name="Green L.D."/>
            <person name="Rogers Y.C."/>
            <person name="Detter J.C."/>
            <person name="Bruce D.C."/>
            <person name="Brettin T.S."/>
        </authorList>
    </citation>
    <scope>NUCLEOTIDE SEQUENCE [LARGE SCALE GENOMIC DNA]</scope>
    <source>
        <strain>Nepal516</strain>
    </source>
</reference>
<name>EPMA_YERPN</name>
<proteinExistence type="inferred from homology"/>
<evidence type="ECO:0000255" key="1">
    <source>
        <dbReference type="HAMAP-Rule" id="MF_00174"/>
    </source>
</evidence>
<comment type="function">
    <text evidence="1">With EpmB is involved in the beta-lysylation step of the post-translational modification of translation elongation factor P (EF-P). Catalyzes the ATP-dependent activation of (R)-beta-lysine produced by EpmB, forming a lysyl-adenylate, from which the beta-lysyl moiety is then transferred to the epsilon-amino group of a conserved specific lysine residue in EF-P.</text>
</comment>
<comment type="catalytic activity">
    <reaction evidence="1">
        <text>D-beta-lysine + L-lysyl-[protein] + ATP = N(6)-((3R)-3,6-diaminohexanoyl)-L-lysyl-[protein] + AMP + diphosphate + H(+)</text>
        <dbReference type="Rhea" id="RHEA:83435"/>
        <dbReference type="Rhea" id="RHEA-COMP:9752"/>
        <dbReference type="Rhea" id="RHEA-COMP:20131"/>
        <dbReference type="ChEBI" id="CHEBI:15378"/>
        <dbReference type="ChEBI" id="CHEBI:29969"/>
        <dbReference type="ChEBI" id="CHEBI:30616"/>
        <dbReference type="ChEBI" id="CHEBI:33019"/>
        <dbReference type="ChEBI" id="CHEBI:84138"/>
        <dbReference type="ChEBI" id="CHEBI:156053"/>
        <dbReference type="ChEBI" id="CHEBI:456215"/>
    </reaction>
    <physiologicalReaction direction="left-to-right" evidence="1">
        <dbReference type="Rhea" id="RHEA:83436"/>
    </physiologicalReaction>
</comment>
<comment type="subunit">
    <text evidence="1">Homodimer.</text>
</comment>
<comment type="similarity">
    <text evidence="1">Belongs to the class-II aminoacyl-tRNA synthetase family. EpmA subfamily.</text>
</comment>
<organism>
    <name type="scientific">Yersinia pestis bv. Antiqua (strain Nepal516)</name>
    <dbReference type="NCBI Taxonomy" id="377628"/>
    <lineage>
        <taxon>Bacteria</taxon>
        <taxon>Pseudomonadati</taxon>
        <taxon>Pseudomonadota</taxon>
        <taxon>Gammaproteobacteria</taxon>
        <taxon>Enterobacterales</taxon>
        <taxon>Yersiniaceae</taxon>
        <taxon>Yersinia</taxon>
    </lineage>
</organism>
<keyword id="KW-0067">ATP-binding</keyword>
<keyword id="KW-0436">Ligase</keyword>
<keyword id="KW-0547">Nucleotide-binding</keyword>
<gene>
    <name evidence="1" type="primary">epmA</name>
    <name type="synonym">yjeA</name>
    <name type="ordered locus">YPN_3309</name>
    <name type="ORF">YP516_3761</name>
</gene>